<keyword id="KW-0066">ATP synthesis</keyword>
<keyword id="KW-0139">CF(1)</keyword>
<keyword id="KW-0375">Hydrogen ion transport</keyword>
<keyword id="KW-0406">Ion transport</keyword>
<keyword id="KW-0472">Membrane</keyword>
<keyword id="KW-0793">Thylakoid</keyword>
<keyword id="KW-0813">Transport</keyword>
<comment type="function">
    <text evidence="1">Produces ATP from ADP in the presence of a proton gradient across the membrane. The gamma chain is believed to be important in regulating ATPase activity and the flow of protons through the CF(0) complex.</text>
</comment>
<comment type="subunit">
    <text evidence="1">F-type ATPases have 2 components, CF(1) - the catalytic core - and CF(0) - the membrane proton channel. CF(1) has five subunits: alpha(3), beta(3), gamma(1), delta(1), epsilon(1). CF(0) has three main subunits: a, b and c.</text>
</comment>
<comment type="subcellular location">
    <subcellularLocation>
        <location evidence="1">Cellular thylakoid membrane</location>
        <topology evidence="1">Peripheral membrane protein</topology>
    </subcellularLocation>
</comment>
<comment type="similarity">
    <text evidence="1">Belongs to the ATPase gamma chain family.</text>
</comment>
<accession>Q3AHK6</accession>
<reference key="1">
    <citation type="submission" date="2005-07" db="EMBL/GenBank/DDBJ databases">
        <title>Complete sequence of Synechococcus sp. CC9605.</title>
        <authorList>
            <consortium name="US DOE Joint Genome Institute"/>
            <person name="Copeland A."/>
            <person name="Lucas S."/>
            <person name="Lapidus A."/>
            <person name="Barry K."/>
            <person name="Detter J.C."/>
            <person name="Glavina T."/>
            <person name="Hammon N."/>
            <person name="Israni S."/>
            <person name="Pitluck S."/>
            <person name="Schmutz J."/>
            <person name="Martinez M."/>
            <person name="Larimer F."/>
            <person name="Land M."/>
            <person name="Kyrpides N."/>
            <person name="Ivanova N."/>
            <person name="Richardson P."/>
        </authorList>
    </citation>
    <scope>NUCLEOTIDE SEQUENCE [LARGE SCALE GENOMIC DNA]</scope>
    <source>
        <strain>CC9605</strain>
    </source>
</reference>
<organism>
    <name type="scientific">Synechococcus sp. (strain CC9605)</name>
    <dbReference type="NCBI Taxonomy" id="110662"/>
    <lineage>
        <taxon>Bacteria</taxon>
        <taxon>Bacillati</taxon>
        <taxon>Cyanobacteriota</taxon>
        <taxon>Cyanophyceae</taxon>
        <taxon>Synechococcales</taxon>
        <taxon>Synechococcaceae</taxon>
        <taxon>Synechococcus</taxon>
    </lineage>
</organism>
<evidence type="ECO:0000255" key="1">
    <source>
        <dbReference type="HAMAP-Rule" id="MF_00815"/>
    </source>
</evidence>
<protein>
    <recommendedName>
        <fullName evidence="1">ATP synthase gamma chain</fullName>
    </recommendedName>
    <alternativeName>
        <fullName evidence="1">ATP synthase F1 sector gamma subunit</fullName>
    </alternativeName>
    <alternativeName>
        <fullName evidence="1">F-ATPase gamma subunit</fullName>
    </alternativeName>
</protein>
<feature type="chain" id="PRO_1000053368" description="ATP synthase gamma chain">
    <location>
        <begin position="1"/>
        <end position="316"/>
    </location>
</feature>
<gene>
    <name evidence="1" type="primary">atpG</name>
    <name evidence="1" type="synonym">atpC</name>
    <name type="ordered locus">Syncc9605_2187</name>
</gene>
<sequence length="316" mass="34803">MANLKEIRDRIKSVKNTRKITEAMRLVAAAKVRRAQEQVLRSRPFADRLARILENLQSRMGFEDAASPLMQQRNVETITLVAVTGDRGLCGGYNANIIKRTEQRFAELKGKGFDVKLLLIGTKAIGYFTRRDYPIQATFSGLEQVPTADEANTISTDLLAEFLAESTDRVELIFTKFINLVSCKPVVQTLLPLDPQDIADPEDEIFRLTTKDGLLTVEPGAGPANTEPKIPSDIVFEQTPEQLLNALLPLYLQNQLLRSLQESAASELASRMTAMNNASDNAKELAKTLTLDYNKARQAAITQEILEVAGGAAAVG</sequence>
<dbReference type="EMBL" id="CP000110">
    <property type="protein sequence ID" value="ABB35926.1"/>
    <property type="molecule type" value="Genomic_DNA"/>
</dbReference>
<dbReference type="RefSeq" id="WP_011365130.1">
    <property type="nucleotide sequence ID" value="NC_007516.1"/>
</dbReference>
<dbReference type="SMR" id="Q3AHK6"/>
<dbReference type="STRING" id="110662.Syncc9605_2187"/>
<dbReference type="KEGG" id="syd:Syncc9605_2187"/>
<dbReference type="eggNOG" id="COG0224">
    <property type="taxonomic scope" value="Bacteria"/>
</dbReference>
<dbReference type="HOGENOM" id="CLU_050669_0_0_3"/>
<dbReference type="OrthoDB" id="9812769at2"/>
<dbReference type="GO" id="GO:0031676">
    <property type="term" value="C:plasma membrane-derived thylakoid membrane"/>
    <property type="evidence" value="ECO:0007669"/>
    <property type="project" value="UniProtKB-SubCell"/>
</dbReference>
<dbReference type="GO" id="GO:0045259">
    <property type="term" value="C:proton-transporting ATP synthase complex"/>
    <property type="evidence" value="ECO:0007669"/>
    <property type="project" value="UniProtKB-KW"/>
</dbReference>
<dbReference type="GO" id="GO:0005524">
    <property type="term" value="F:ATP binding"/>
    <property type="evidence" value="ECO:0007669"/>
    <property type="project" value="UniProtKB-UniRule"/>
</dbReference>
<dbReference type="GO" id="GO:0046933">
    <property type="term" value="F:proton-transporting ATP synthase activity, rotational mechanism"/>
    <property type="evidence" value="ECO:0007669"/>
    <property type="project" value="UniProtKB-UniRule"/>
</dbReference>
<dbReference type="CDD" id="cd12151">
    <property type="entry name" value="F1-ATPase_gamma"/>
    <property type="match status" value="1"/>
</dbReference>
<dbReference type="FunFam" id="3.40.1380.10:FF:000006">
    <property type="entry name" value="ATP synthase gamma chain"/>
    <property type="match status" value="1"/>
</dbReference>
<dbReference type="FunFam" id="1.10.287.80:FF:000003">
    <property type="entry name" value="ATP synthase gamma chain, chloroplastic"/>
    <property type="match status" value="1"/>
</dbReference>
<dbReference type="Gene3D" id="3.40.1380.10">
    <property type="match status" value="1"/>
</dbReference>
<dbReference type="Gene3D" id="1.10.287.80">
    <property type="entry name" value="ATP synthase, gamma subunit, helix hairpin domain"/>
    <property type="match status" value="2"/>
</dbReference>
<dbReference type="HAMAP" id="MF_00815">
    <property type="entry name" value="ATP_synth_gamma_bact"/>
    <property type="match status" value="1"/>
</dbReference>
<dbReference type="InterPro" id="IPR035968">
    <property type="entry name" value="ATP_synth_F1_ATPase_gsu"/>
</dbReference>
<dbReference type="InterPro" id="IPR000131">
    <property type="entry name" value="ATP_synth_F1_gsu"/>
</dbReference>
<dbReference type="InterPro" id="IPR023632">
    <property type="entry name" value="ATP_synth_F1_gsu_CS"/>
</dbReference>
<dbReference type="NCBIfam" id="TIGR01146">
    <property type="entry name" value="ATPsyn_F1gamma"/>
    <property type="match status" value="1"/>
</dbReference>
<dbReference type="NCBIfam" id="NF004145">
    <property type="entry name" value="PRK05621.1-2"/>
    <property type="match status" value="1"/>
</dbReference>
<dbReference type="PANTHER" id="PTHR11693">
    <property type="entry name" value="ATP SYNTHASE GAMMA CHAIN"/>
    <property type="match status" value="1"/>
</dbReference>
<dbReference type="PANTHER" id="PTHR11693:SF41">
    <property type="entry name" value="ATP SYNTHASE GAMMA CHAIN, CHLOROPLASTIC"/>
    <property type="match status" value="1"/>
</dbReference>
<dbReference type="Pfam" id="PF00231">
    <property type="entry name" value="ATP-synt"/>
    <property type="match status" value="1"/>
</dbReference>
<dbReference type="PRINTS" id="PR00126">
    <property type="entry name" value="ATPASEGAMMA"/>
</dbReference>
<dbReference type="SUPFAM" id="SSF52943">
    <property type="entry name" value="ATP synthase (F1-ATPase), gamma subunit"/>
    <property type="match status" value="1"/>
</dbReference>
<dbReference type="PROSITE" id="PS00153">
    <property type="entry name" value="ATPASE_GAMMA"/>
    <property type="match status" value="1"/>
</dbReference>
<name>ATPG_SYNSC</name>
<proteinExistence type="inferred from homology"/>